<reference key="1">
    <citation type="journal article" date="2003" name="Proc. Natl. Acad. Sci. U.S.A.">
        <title>Reductive genome evolution in Buchnera aphidicola.</title>
        <authorList>
            <person name="van Ham R.C.H.J."/>
            <person name="Kamerbeek J."/>
            <person name="Palacios C."/>
            <person name="Rausell C."/>
            <person name="Abascal F."/>
            <person name="Bastolla U."/>
            <person name="Fernandez J.M."/>
            <person name="Jimenez L."/>
            <person name="Postigo M."/>
            <person name="Silva F.J."/>
            <person name="Tamames J."/>
            <person name="Viguera E."/>
            <person name="Latorre A."/>
            <person name="Valencia A."/>
            <person name="Moran F."/>
            <person name="Moya A."/>
        </authorList>
    </citation>
    <scope>NUCLEOTIDE SEQUENCE [LARGE SCALE GENOMIC DNA]</scope>
    <source>
        <strain>Bp</strain>
    </source>
</reference>
<comment type="function">
    <text evidence="1">Associates with the EF-Tu.GDP complex and induces the exchange of GDP to GTP. It remains bound to the aminoacyl-tRNA.EF-Tu.GTP complex up to the GTP hydrolysis stage on the ribosome.</text>
</comment>
<comment type="subcellular location">
    <subcellularLocation>
        <location evidence="1">Cytoplasm</location>
    </subcellularLocation>
</comment>
<comment type="similarity">
    <text evidence="1">Belongs to the EF-Ts family.</text>
</comment>
<feature type="chain" id="PRO_0000161094" description="Elongation factor Ts">
    <location>
        <begin position="1"/>
        <end position="266"/>
    </location>
</feature>
<feature type="region of interest" description="Involved in Mg(2+) ion dislocation from EF-Tu" evidence="1">
    <location>
        <begin position="80"/>
        <end position="83"/>
    </location>
</feature>
<evidence type="ECO:0000255" key="1">
    <source>
        <dbReference type="HAMAP-Rule" id="MF_00050"/>
    </source>
</evidence>
<keyword id="KW-0963">Cytoplasm</keyword>
<keyword id="KW-0251">Elongation factor</keyword>
<keyword id="KW-0648">Protein biosynthesis</keyword>
<keyword id="KW-1185">Reference proteome</keyword>
<organism>
    <name type="scientific">Buchnera aphidicola subsp. Baizongia pistaciae (strain Bp)</name>
    <dbReference type="NCBI Taxonomy" id="224915"/>
    <lineage>
        <taxon>Bacteria</taxon>
        <taxon>Pseudomonadati</taxon>
        <taxon>Pseudomonadota</taxon>
        <taxon>Gammaproteobacteria</taxon>
        <taxon>Enterobacterales</taxon>
        <taxon>Erwiniaceae</taxon>
        <taxon>Buchnera</taxon>
    </lineage>
</organism>
<gene>
    <name evidence="1" type="primary">tsf</name>
    <name type="ordered locus">bbp_214</name>
</gene>
<name>EFTS_BUCBP</name>
<protein>
    <recommendedName>
        <fullName evidence="1">Elongation factor Ts</fullName>
        <shortName evidence="1">EF-Ts</shortName>
    </recommendedName>
</protein>
<dbReference type="EMBL" id="AE016826">
    <property type="protein sequence ID" value="AAO26946.1"/>
    <property type="molecule type" value="Genomic_DNA"/>
</dbReference>
<dbReference type="RefSeq" id="WP_011091347.1">
    <property type="nucleotide sequence ID" value="NC_004545.1"/>
</dbReference>
<dbReference type="SMR" id="P59431"/>
<dbReference type="STRING" id="224915.bbp_214"/>
<dbReference type="KEGG" id="bab:bbp_214"/>
<dbReference type="eggNOG" id="COG0264">
    <property type="taxonomic scope" value="Bacteria"/>
</dbReference>
<dbReference type="HOGENOM" id="CLU_047155_0_2_6"/>
<dbReference type="OrthoDB" id="9808348at2"/>
<dbReference type="Proteomes" id="UP000000601">
    <property type="component" value="Chromosome"/>
</dbReference>
<dbReference type="GO" id="GO:0005737">
    <property type="term" value="C:cytoplasm"/>
    <property type="evidence" value="ECO:0007669"/>
    <property type="project" value="UniProtKB-SubCell"/>
</dbReference>
<dbReference type="GO" id="GO:0003746">
    <property type="term" value="F:translation elongation factor activity"/>
    <property type="evidence" value="ECO:0007669"/>
    <property type="project" value="UniProtKB-UniRule"/>
</dbReference>
<dbReference type="CDD" id="cd14275">
    <property type="entry name" value="UBA_EF-Ts"/>
    <property type="match status" value="1"/>
</dbReference>
<dbReference type="FunFam" id="1.10.8.10:FF:000001">
    <property type="entry name" value="Elongation factor Ts"/>
    <property type="match status" value="1"/>
</dbReference>
<dbReference type="Gene3D" id="1.10.286.20">
    <property type="match status" value="1"/>
</dbReference>
<dbReference type="Gene3D" id="1.10.8.10">
    <property type="entry name" value="DNA helicase RuvA subunit, C-terminal domain"/>
    <property type="match status" value="1"/>
</dbReference>
<dbReference type="Gene3D" id="3.30.479.20">
    <property type="entry name" value="Elongation factor Ts, dimerisation domain"/>
    <property type="match status" value="2"/>
</dbReference>
<dbReference type="HAMAP" id="MF_00050">
    <property type="entry name" value="EF_Ts"/>
    <property type="match status" value="1"/>
</dbReference>
<dbReference type="InterPro" id="IPR036402">
    <property type="entry name" value="EF-Ts_dimer_sf"/>
</dbReference>
<dbReference type="InterPro" id="IPR001816">
    <property type="entry name" value="Transl_elong_EFTs/EF1B"/>
</dbReference>
<dbReference type="InterPro" id="IPR014039">
    <property type="entry name" value="Transl_elong_EFTs/EF1B_dimer"/>
</dbReference>
<dbReference type="InterPro" id="IPR018101">
    <property type="entry name" value="Transl_elong_Ts_CS"/>
</dbReference>
<dbReference type="InterPro" id="IPR009060">
    <property type="entry name" value="UBA-like_sf"/>
</dbReference>
<dbReference type="NCBIfam" id="TIGR00116">
    <property type="entry name" value="tsf"/>
    <property type="match status" value="1"/>
</dbReference>
<dbReference type="PANTHER" id="PTHR11741">
    <property type="entry name" value="ELONGATION FACTOR TS"/>
    <property type="match status" value="1"/>
</dbReference>
<dbReference type="PANTHER" id="PTHR11741:SF0">
    <property type="entry name" value="ELONGATION FACTOR TS, MITOCHONDRIAL"/>
    <property type="match status" value="1"/>
</dbReference>
<dbReference type="Pfam" id="PF00889">
    <property type="entry name" value="EF_TS"/>
    <property type="match status" value="1"/>
</dbReference>
<dbReference type="SUPFAM" id="SSF54713">
    <property type="entry name" value="Elongation factor Ts (EF-Ts), dimerisation domain"/>
    <property type="match status" value="1"/>
</dbReference>
<dbReference type="SUPFAM" id="SSF46934">
    <property type="entry name" value="UBA-like"/>
    <property type="match status" value="1"/>
</dbReference>
<dbReference type="PROSITE" id="PS01126">
    <property type="entry name" value="EF_TS_1"/>
    <property type="match status" value="1"/>
</dbReference>
<dbReference type="PROSITE" id="PS01127">
    <property type="entry name" value="EF_TS_2"/>
    <property type="match status" value="1"/>
</dbReference>
<accession>P59431</accession>
<proteinExistence type="inferred from homology"/>
<sequence length="266" mass="30724">MTNISAFLVKKLRARTGVGIMDCKRALMCMKGDIDKSVDFLRKMGQIKAEKKQFLLTQNGSIFISFDHNLGVMLELSSETDFVSKHKDFLCLGEKILDYVLTHPMESIEFIRKHFEDLRTSLVMQVNENIVIRRIQTLNKKYITGYLHGRRIGVLVQTSSINNHLAKEIAMHIAASNPKYLRSDLVPKSIMEREYEIQLELAMQSKKSKPILEKIIKGRMIKFANEISLLGQNFIFDPHRKVSEVILKNNIDVISFVRYEVGEKYI</sequence>